<evidence type="ECO:0000250" key="1"/>
<evidence type="ECO:0000250" key="2">
    <source>
        <dbReference type="UniProtKB" id="P81382"/>
    </source>
</evidence>
<evidence type="ECO:0000255" key="3"/>
<evidence type="ECO:0000269" key="4">
    <source>
    </source>
</evidence>
<evidence type="ECO:0000303" key="5">
    <source>
    </source>
</evidence>
<evidence type="ECO:0000303" key="6">
    <source>
    </source>
</evidence>
<evidence type="ECO:0000305" key="7"/>
<evidence type="ECO:0000305" key="8">
    <source>
    </source>
</evidence>
<keyword id="KW-0044">Antibiotic</keyword>
<keyword id="KW-0929">Antimicrobial</keyword>
<keyword id="KW-0053">Apoptosis</keyword>
<keyword id="KW-0204">Cytolysis</keyword>
<keyword id="KW-0903">Direct protein sequencing</keyword>
<keyword id="KW-1015">Disulfide bond</keyword>
<keyword id="KW-0274">FAD</keyword>
<keyword id="KW-0285">Flavoprotein</keyword>
<keyword id="KW-0325">Glycoprotein</keyword>
<keyword id="KW-0354">Hemolysis</keyword>
<keyword id="KW-1199">Hemostasis impairing toxin</keyword>
<keyword id="KW-0560">Oxidoreductase</keyword>
<keyword id="KW-0964">Secreted</keyword>
<keyword id="KW-0732">Signal</keyword>
<keyword id="KW-0800">Toxin</keyword>
<comment type="function">
    <text evidence="2">Catalyzes an oxidative deamination of predominantly hydrophobic and aromatic L-amino acids, thus producing hydrogen peroxide that may contribute to the diverse toxic effects of this enzyme. Exhibits diverse biological activities, such as hemolysis, edema, hemorrhage, apoptosis, antibacterial and antiparasitic activities, as well as regulation of platelet aggregation. Effects of snake L-amino oxidases on platelets are controversial, since they either induce aggregation or inhibit agonist-induced aggregation. These different effects are probably due to different experimental conditions.</text>
</comment>
<comment type="catalytic activity">
    <reaction evidence="2">
        <text>an L-alpha-amino acid + O2 + H2O = a 2-oxocarboxylate + H2O2 + NH4(+)</text>
        <dbReference type="Rhea" id="RHEA:13781"/>
        <dbReference type="ChEBI" id="CHEBI:15377"/>
        <dbReference type="ChEBI" id="CHEBI:15379"/>
        <dbReference type="ChEBI" id="CHEBI:16240"/>
        <dbReference type="ChEBI" id="CHEBI:28938"/>
        <dbReference type="ChEBI" id="CHEBI:35179"/>
        <dbReference type="ChEBI" id="CHEBI:59869"/>
        <dbReference type="EC" id="1.4.3.2"/>
    </reaction>
</comment>
<comment type="cofactor">
    <cofactor evidence="2">
        <name>FAD</name>
        <dbReference type="ChEBI" id="CHEBI:57692"/>
    </cofactor>
</comment>
<comment type="subunit">
    <text evidence="2">Homodimer; non-covalently linked.</text>
</comment>
<comment type="subcellular location">
    <subcellularLocation>
        <location evidence="4">Secreted</location>
    </subcellularLocation>
</comment>
<comment type="tissue specificity">
    <text evidence="8">Expressed by the venom gland.</text>
</comment>
<comment type="similarity">
    <text evidence="7">Belongs to the flavin monoamine oxidase family. FIG1 subfamily.</text>
</comment>
<organism>
    <name type="scientific">Crotalus adamanteus</name>
    <name type="common">Eastern diamondback rattlesnake</name>
    <dbReference type="NCBI Taxonomy" id="8729"/>
    <lineage>
        <taxon>Eukaryota</taxon>
        <taxon>Metazoa</taxon>
        <taxon>Chordata</taxon>
        <taxon>Craniata</taxon>
        <taxon>Vertebrata</taxon>
        <taxon>Euteleostomi</taxon>
        <taxon>Lepidosauria</taxon>
        <taxon>Squamata</taxon>
        <taxon>Bifurcata</taxon>
        <taxon>Unidentata</taxon>
        <taxon>Episquamata</taxon>
        <taxon>Toxicofera</taxon>
        <taxon>Serpentes</taxon>
        <taxon>Colubroidea</taxon>
        <taxon>Viperidae</taxon>
        <taxon>Crotalinae</taxon>
        <taxon>Crotalus</taxon>
    </lineage>
</organism>
<protein>
    <recommendedName>
        <fullName>L-amino-acid oxidase</fullName>
        <shortName evidence="5 6">LAAO</shortName>
        <shortName>LAO</shortName>
        <ecNumber evidence="2">1.4.3.2</ecNumber>
    </recommendedName>
</protein>
<reference key="1">
    <citation type="journal article" date="2011" name="Toxicon">
        <title>A high-throughput venom-gland transcriptome for the eastern diamondback rattlesnake (Crotalus adamanteus) and evidence for pervasive positive selection across toxin classes.</title>
        <authorList>
            <person name="Rokyta D.R."/>
            <person name="Wray K.P."/>
            <person name="Lemmon A.R."/>
            <person name="Lemmon E.M."/>
            <person name="Caudle S.B."/>
        </authorList>
    </citation>
    <scope>NUCLEOTIDE SEQUENCE [MRNA]</scope>
    <source>
        <tissue>Venom gland</tissue>
    </source>
</reference>
<reference key="2">
    <citation type="journal article" date="2012" name="BMC Genomics">
        <title>The venom-gland transcriptome of the eastern diamondback rattlesnake (Crotalus adamanteus).</title>
        <authorList>
            <person name="Rokyta D.R."/>
            <person name="Lemmon A.R."/>
            <person name="Margres M.J."/>
            <person name="Aronow K."/>
        </authorList>
    </citation>
    <scope>NUCLEOTIDE SEQUENCE [MRNA]</scope>
    <source>
        <tissue>Venom gland</tissue>
    </source>
</reference>
<reference key="3">
    <citation type="journal article" date="2014" name="J. Proteomics">
        <title>Linking the transcriptome and proteome to characterize the venom of the eastern diamondback rattlesnake (Crotalus adamanteus).</title>
        <authorList>
            <person name="Margres M.J."/>
            <person name="McGivern J.J."/>
            <person name="Wray K.P."/>
            <person name="Seavy M."/>
            <person name="Calvin K."/>
            <person name="Rokyta D.R."/>
        </authorList>
    </citation>
    <scope>PROTEIN SEQUENCE OF 19-27</scope>
    <scope>IDENTIFICATION BY MASS SPECTROMETRY</scope>
    <scope>SUBCELLULAR LOCATION</scope>
    <source>
        <tissue>Venom</tissue>
    </source>
</reference>
<name>OXLA2_CROAD</name>
<feature type="signal peptide" evidence="4">
    <location>
        <begin position="1"/>
        <end position="18"/>
    </location>
</feature>
<feature type="chain" id="PRO_5000771366" description="L-amino-acid oxidase">
    <location>
        <begin position="19"/>
        <end position="516"/>
    </location>
</feature>
<feature type="binding site" evidence="2">
    <location>
        <begin position="61"/>
        <end position="62"/>
    </location>
    <ligand>
        <name>FAD</name>
        <dbReference type="ChEBI" id="CHEBI:57692"/>
    </ligand>
</feature>
<feature type="binding site" evidence="2">
    <location>
        <begin position="81"/>
        <end position="82"/>
    </location>
    <ligand>
        <name>FAD</name>
        <dbReference type="ChEBI" id="CHEBI:57692"/>
    </ligand>
</feature>
<feature type="binding site" evidence="2">
    <location>
        <position position="89"/>
    </location>
    <ligand>
        <name>FAD</name>
        <dbReference type="ChEBI" id="CHEBI:57692"/>
    </ligand>
</feature>
<feature type="binding site" evidence="2">
    <location>
        <begin position="103"/>
        <end position="106"/>
    </location>
    <ligand>
        <name>FAD</name>
        <dbReference type="ChEBI" id="CHEBI:57692"/>
    </ligand>
</feature>
<feature type="binding site" evidence="2">
    <location>
        <position position="106"/>
    </location>
    <ligand>
        <name>substrate</name>
    </ligand>
</feature>
<feature type="binding site" evidence="2">
    <location>
        <position position="239"/>
    </location>
    <ligand>
        <name>substrate</name>
    </ligand>
</feature>
<feature type="binding site" evidence="1">
    <location>
        <position position="279"/>
    </location>
    <ligand>
        <name>FAD</name>
        <dbReference type="ChEBI" id="CHEBI:57692"/>
    </ligand>
</feature>
<feature type="binding site" evidence="2">
    <location>
        <position position="390"/>
    </location>
    <ligand>
        <name>substrate</name>
    </ligand>
</feature>
<feature type="binding site" evidence="2">
    <location>
        <position position="475"/>
    </location>
    <ligand>
        <name>FAD</name>
        <dbReference type="ChEBI" id="CHEBI:57692"/>
    </ligand>
</feature>
<feature type="binding site" evidence="2">
    <location>
        <begin position="482"/>
        <end position="487"/>
    </location>
    <ligand>
        <name>FAD</name>
        <dbReference type="ChEBI" id="CHEBI:57692"/>
    </ligand>
</feature>
<feature type="binding site" evidence="2">
    <location>
        <begin position="482"/>
        <end position="483"/>
    </location>
    <ligand>
        <name>substrate</name>
    </ligand>
</feature>
<feature type="glycosylation site" description="N-linked (GlcNAc...) asparagine" evidence="3">
    <location>
        <position position="379"/>
    </location>
</feature>
<feature type="disulfide bond" evidence="2">
    <location>
        <begin position="28"/>
        <end position="189"/>
    </location>
</feature>
<feature type="disulfide bond" evidence="2">
    <location>
        <begin position="349"/>
        <end position="430"/>
    </location>
</feature>
<proteinExistence type="evidence at protein level"/>
<accession>F8S0Z5</accession>
<accession>J3S821</accession>
<dbReference type="EC" id="1.4.3.2" evidence="2"/>
<dbReference type="EMBL" id="HQ414099">
    <property type="protein sequence ID" value="AEJ31977.1"/>
    <property type="molecule type" value="mRNA"/>
</dbReference>
<dbReference type="EMBL" id="JU173667">
    <property type="protein sequence ID" value="AFJ49193.1"/>
    <property type="molecule type" value="mRNA"/>
</dbReference>
<dbReference type="SMR" id="F8S0Z5"/>
<dbReference type="BioCyc" id="MetaCyc:MONOMER-20109"/>
<dbReference type="GO" id="GO:0005576">
    <property type="term" value="C:extracellular region"/>
    <property type="evidence" value="ECO:0007669"/>
    <property type="project" value="UniProtKB-SubCell"/>
</dbReference>
<dbReference type="GO" id="GO:0001716">
    <property type="term" value="F:L-amino-acid oxidase activity"/>
    <property type="evidence" value="ECO:0007669"/>
    <property type="project" value="UniProtKB-EC"/>
</dbReference>
<dbReference type="GO" id="GO:0090729">
    <property type="term" value="F:toxin activity"/>
    <property type="evidence" value="ECO:0007669"/>
    <property type="project" value="UniProtKB-KW"/>
</dbReference>
<dbReference type="GO" id="GO:0009063">
    <property type="term" value="P:amino acid catabolic process"/>
    <property type="evidence" value="ECO:0007669"/>
    <property type="project" value="TreeGrafter"/>
</dbReference>
<dbReference type="GO" id="GO:0006915">
    <property type="term" value="P:apoptotic process"/>
    <property type="evidence" value="ECO:0007669"/>
    <property type="project" value="UniProtKB-KW"/>
</dbReference>
<dbReference type="GO" id="GO:0042742">
    <property type="term" value="P:defense response to bacterium"/>
    <property type="evidence" value="ECO:0007669"/>
    <property type="project" value="UniProtKB-KW"/>
</dbReference>
<dbReference type="GO" id="GO:0031640">
    <property type="term" value="P:killing of cells of another organism"/>
    <property type="evidence" value="ECO:0007669"/>
    <property type="project" value="UniProtKB-KW"/>
</dbReference>
<dbReference type="FunFam" id="1.10.405.10:FF:000004">
    <property type="entry name" value="Amine oxidase"/>
    <property type="match status" value="1"/>
</dbReference>
<dbReference type="FunFam" id="3.50.50.60:FF:000450">
    <property type="entry name" value="Amine oxidase"/>
    <property type="match status" value="1"/>
</dbReference>
<dbReference type="Gene3D" id="3.90.660.10">
    <property type="match status" value="1"/>
</dbReference>
<dbReference type="Gene3D" id="3.50.50.60">
    <property type="entry name" value="FAD/NAD(P)-binding domain"/>
    <property type="match status" value="1"/>
</dbReference>
<dbReference type="Gene3D" id="1.10.405.10">
    <property type="entry name" value="Guanine Nucleotide Dissociation Inhibitor, domain 1"/>
    <property type="match status" value="1"/>
</dbReference>
<dbReference type="InterPro" id="IPR002937">
    <property type="entry name" value="Amino_oxidase"/>
</dbReference>
<dbReference type="InterPro" id="IPR036188">
    <property type="entry name" value="FAD/NAD-bd_sf"/>
</dbReference>
<dbReference type="InterPro" id="IPR050281">
    <property type="entry name" value="Flavin_monoamine_oxidase"/>
</dbReference>
<dbReference type="PANTHER" id="PTHR10742:SF355">
    <property type="entry name" value="AMINE OXIDASE"/>
    <property type="match status" value="1"/>
</dbReference>
<dbReference type="PANTHER" id="PTHR10742">
    <property type="entry name" value="FLAVIN MONOAMINE OXIDASE"/>
    <property type="match status" value="1"/>
</dbReference>
<dbReference type="Pfam" id="PF01593">
    <property type="entry name" value="Amino_oxidase"/>
    <property type="match status" value="1"/>
</dbReference>
<dbReference type="SUPFAM" id="SSF54373">
    <property type="entry name" value="FAD-linked reductases, C-terminal domain"/>
    <property type="match status" value="1"/>
</dbReference>
<dbReference type="SUPFAM" id="SSF51905">
    <property type="entry name" value="FAD/NAD(P)-binding domain"/>
    <property type="match status" value="1"/>
</dbReference>
<sequence>MNVFFMFSLLFLAALGSCAHDRNPLEECFRETDYEEFLEIAKNGLTATSNPKRVVIVGAGMAGLSAAYVLAGAGHQVTVLEASERVGGRVRTYRKKDWYANLGPMRLPTKHRIVREYIKKFDLKLNEFSQENENAWYFIKNIRKRVREVKNNPGLLEYPVKPSEEGKSAAQLYVESLRKVVKELKRTNCKYILDKYDTYSTKEYLLKEGNLSPGAVDMIGDLLNEDSGYYVSFIESLKHDDIFGYEKRFDEIVGGMDQLPTSMYEAIKEKVQVHFNARVIEIQQNDREATVTYQTSANEMSSVTADYVIVCTTSRAARRIKFEPPLPPKKAHALRSVHYRSGTKIFLTCKKKFWEDDGIRGGKSTTDLPSRFIYYPNHNFTSGVGVIIAYGIGDDANFFQALDFKDCADIVINDLSLIHQLPKEDIQTFCRPSMIQRWSLDKYAMGGITTFTPYQFQHFSEALTAPFKRIYFAGEYTAQFHGWIDSTIKSGLTAARDVNRASENPSGIHLSNDNEF</sequence>